<comment type="function">
    <text evidence="1">Forms part of the ribosomal stalk which helps the ribosome interact with GTP-bound translation factors. Is thus essential for accurate translation.</text>
</comment>
<comment type="subunit">
    <text evidence="1">Homodimer. Part of the ribosomal stalk of the 50S ribosomal subunit. Forms a multimeric L10(L12)X complex, where L10 forms an elongated spine to which 2 to 4 L12 dimers bind in a sequential fashion. Binds GTP-bound translation factors.</text>
</comment>
<comment type="subcellular location">
    <subcellularLocation>
        <location>Plastid</location>
    </subcellularLocation>
</comment>
<comment type="similarity">
    <text evidence="1">Belongs to the bacterial ribosomal protein bL12 family.</text>
</comment>
<organism>
    <name type="scientific">Euglena longa</name>
    <name type="common">Euglenophycean alga</name>
    <name type="synonym">Astasia longa</name>
    <dbReference type="NCBI Taxonomy" id="3037"/>
    <lineage>
        <taxon>Eukaryota</taxon>
        <taxon>Discoba</taxon>
        <taxon>Euglenozoa</taxon>
        <taxon>Euglenida</taxon>
        <taxon>Spirocuta</taxon>
        <taxon>Euglenophyceae</taxon>
        <taxon>Euglenales</taxon>
        <taxon>Euglenaceae</taxon>
        <taxon>Euglena</taxon>
    </lineage>
</organism>
<reference key="1">
    <citation type="journal article" date="2000" name="Protist">
        <title>Complete gene map of the plastid genome of the nonphotosynthetic euglenoid flagellate Astasia longa.</title>
        <authorList>
            <person name="Gockel G."/>
            <person name="Hachtel W."/>
        </authorList>
    </citation>
    <scope>NUCLEOTIDE SEQUENCE [LARGE SCALE GENOMIC DNA]</scope>
    <source>
        <strain>CCAP 1204-17a</strain>
    </source>
</reference>
<geneLocation type="non-photosynthetic plastid"/>
<name>RK12_EUGLO</name>
<dbReference type="EMBL" id="AJ294725">
    <property type="protein sequence ID" value="CAC24604.1"/>
    <property type="molecule type" value="Genomic_DNA"/>
</dbReference>
<dbReference type="RefSeq" id="NP_074993.1">
    <property type="nucleotide sequence ID" value="NC_002652.1"/>
</dbReference>
<dbReference type="SMR" id="P58138"/>
<dbReference type="GeneID" id="802513"/>
<dbReference type="GO" id="GO:0009536">
    <property type="term" value="C:plastid"/>
    <property type="evidence" value="ECO:0007669"/>
    <property type="project" value="UniProtKB-SubCell"/>
</dbReference>
<dbReference type="GO" id="GO:1990904">
    <property type="term" value="C:ribonucleoprotein complex"/>
    <property type="evidence" value="ECO:0007669"/>
    <property type="project" value="UniProtKB-KW"/>
</dbReference>
<dbReference type="GO" id="GO:0005840">
    <property type="term" value="C:ribosome"/>
    <property type="evidence" value="ECO:0007669"/>
    <property type="project" value="UniProtKB-KW"/>
</dbReference>
<dbReference type="GO" id="GO:0003729">
    <property type="term" value="F:mRNA binding"/>
    <property type="evidence" value="ECO:0007669"/>
    <property type="project" value="TreeGrafter"/>
</dbReference>
<dbReference type="GO" id="GO:0003735">
    <property type="term" value="F:structural constituent of ribosome"/>
    <property type="evidence" value="ECO:0007669"/>
    <property type="project" value="InterPro"/>
</dbReference>
<dbReference type="GO" id="GO:0006412">
    <property type="term" value="P:translation"/>
    <property type="evidence" value="ECO:0007669"/>
    <property type="project" value="InterPro"/>
</dbReference>
<dbReference type="CDD" id="cd00387">
    <property type="entry name" value="Ribosomal_L7_L12"/>
    <property type="match status" value="1"/>
</dbReference>
<dbReference type="FunFam" id="3.30.1390.10:FF:000001">
    <property type="entry name" value="50S ribosomal protein L7/L12"/>
    <property type="match status" value="1"/>
</dbReference>
<dbReference type="Gene3D" id="3.30.1390.10">
    <property type="match status" value="1"/>
</dbReference>
<dbReference type="HAMAP" id="MF_00368">
    <property type="entry name" value="Ribosomal_bL12"/>
    <property type="match status" value="1"/>
</dbReference>
<dbReference type="InterPro" id="IPR000206">
    <property type="entry name" value="Ribosomal_bL12"/>
</dbReference>
<dbReference type="InterPro" id="IPR013823">
    <property type="entry name" value="Ribosomal_bL12_C"/>
</dbReference>
<dbReference type="InterPro" id="IPR014719">
    <property type="entry name" value="Ribosomal_bL12_C/ClpS-like"/>
</dbReference>
<dbReference type="PANTHER" id="PTHR45987">
    <property type="entry name" value="39S RIBOSOMAL PROTEIN L12"/>
    <property type="match status" value="1"/>
</dbReference>
<dbReference type="PANTHER" id="PTHR45987:SF4">
    <property type="entry name" value="LARGE RIBOSOMAL SUBUNIT PROTEIN BL12M"/>
    <property type="match status" value="1"/>
</dbReference>
<dbReference type="Pfam" id="PF00542">
    <property type="entry name" value="Ribosomal_L12"/>
    <property type="match status" value="1"/>
</dbReference>
<dbReference type="SUPFAM" id="SSF54736">
    <property type="entry name" value="ClpS-like"/>
    <property type="match status" value="1"/>
</dbReference>
<evidence type="ECO:0000255" key="1">
    <source>
        <dbReference type="HAMAP-Rule" id="MF_00368"/>
    </source>
</evidence>
<evidence type="ECO:0000305" key="2"/>
<feature type="chain" id="PRO_0000157613" description="Large ribosomal subunit protein bL12c">
    <location>
        <begin position="1"/>
        <end position="138"/>
    </location>
</feature>
<gene>
    <name evidence="1" type="primary">rpl12</name>
</gene>
<proteinExistence type="inferred from homology"/>
<keyword id="KW-0934">Plastid</keyword>
<keyword id="KW-0687">Ribonucleoprotein</keyword>
<keyword id="KW-0689">Ribosomal protein</keyword>
<accession>P58138</accession>
<sequence>MDKLSEFCSKFVENVMKMTVNQLNKVTKELAKKITIDSNFKSVTDNNSVIESSKEITENKVIEKLEFNIILESFISSQRIKLIKTLRDLISIGLKEAKDLIETLPKTIYEGVSKEFAEETKKTLEESGASVIITENII</sequence>
<protein>
    <recommendedName>
        <fullName evidence="2">Large ribosomal subunit protein bL12c</fullName>
    </recommendedName>
    <alternativeName>
        <fullName>50S ribosomal protein L12, plastid</fullName>
    </alternativeName>
</protein>